<keyword id="KW-0963">Cytoplasm</keyword>
<keyword id="KW-0269">Exonuclease</keyword>
<keyword id="KW-0378">Hydrolase</keyword>
<keyword id="KW-0540">Nuclease</keyword>
<keyword id="KW-1185">Reference proteome</keyword>
<proteinExistence type="inferred from homology"/>
<reference key="1">
    <citation type="journal article" date="2001" name="Proc. Natl. Acad. Sci. U.S.A.">
        <title>Genome sequence of an industrial microorganism Streptomyces avermitilis: deducing the ability of producing secondary metabolites.</title>
        <authorList>
            <person name="Omura S."/>
            <person name="Ikeda H."/>
            <person name="Ishikawa J."/>
            <person name="Hanamoto A."/>
            <person name="Takahashi C."/>
            <person name="Shinose M."/>
            <person name="Takahashi Y."/>
            <person name="Horikawa H."/>
            <person name="Nakazawa H."/>
            <person name="Osonoe T."/>
            <person name="Kikuchi H."/>
            <person name="Shiba T."/>
            <person name="Sakaki Y."/>
            <person name="Hattori M."/>
        </authorList>
    </citation>
    <scope>NUCLEOTIDE SEQUENCE [LARGE SCALE GENOMIC DNA]</scope>
    <source>
        <strain>ATCC 31267 / DSM 46492 / JCM 5070 / NBRC 14893 / NCIMB 12804 / NRRL 8165 / MA-4680</strain>
    </source>
</reference>
<reference key="2">
    <citation type="journal article" date="2003" name="Nat. Biotechnol.">
        <title>Complete genome sequence and comparative analysis of the industrial microorganism Streptomyces avermitilis.</title>
        <authorList>
            <person name="Ikeda H."/>
            <person name="Ishikawa J."/>
            <person name="Hanamoto A."/>
            <person name="Shinose M."/>
            <person name="Kikuchi H."/>
            <person name="Shiba T."/>
            <person name="Sakaki Y."/>
            <person name="Hattori M."/>
            <person name="Omura S."/>
        </authorList>
    </citation>
    <scope>NUCLEOTIDE SEQUENCE [LARGE SCALE GENOMIC DNA]</scope>
    <source>
        <strain>ATCC 31267 / DSM 46492 / JCM 5070 / NBRC 14893 / NCIMB 12804 / NRRL 8165 / MA-4680</strain>
    </source>
</reference>
<protein>
    <recommendedName>
        <fullName evidence="1">Exodeoxyribonuclease 7 small subunit</fullName>
        <ecNumber evidence="1">3.1.11.6</ecNumber>
    </recommendedName>
    <alternativeName>
        <fullName evidence="1">Exodeoxyribonuclease VII small subunit</fullName>
        <shortName evidence="1">Exonuclease VII small subunit</shortName>
    </alternativeName>
</protein>
<sequence>MTSRTDETANATALGYEQARDELIEVVRRLEAGGTTLEESLALWERGEELAKVCRTWLEGARKRLDAALAEEENAGDDSE</sequence>
<comment type="function">
    <text evidence="1">Bidirectionally degrades single-stranded DNA into large acid-insoluble oligonucleotides, which are then degraded further into small acid-soluble oligonucleotides.</text>
</comment>
<comment type="catalytic activity">
    <reaction evidence="1">
        <text>Exonucleolytic cleavage in either 5'- to 3'- or 3'- to 5'-direction to yield nucleoside 5'-phosphates.</text>
        <dbReference type="EC" id="3.1.11.6"/>
    </reaction>
</comment>
<comment type="subunit">
    <text evidence="1">Heterooligomer composed of large and small subunits.</text>
</comment>
<comment type="subcellular location">
    <subcellularLocation>
        <location evidence="1">Cytoplasm</location>
    </subcellularLocation>
</comment>
<comment type="similarity">
    <text evidence="1">Belongs to the XseB family.</text>
</comment>
<dbReference type="EC" id="3.1.11.6" evidence="1"/>
<dbReference type="EMBL" id="BA000030">
    <property type="protein sequence ID" value="BAC70923.1"/>
    <property type="molecule type" value="Genomic_DNA"/>
</dbReference>
<dbReference type="RefSeq" id="WP_010984642.1">
    <property type="nucleotide sequence ID" value="NZ_JZJK01000090.1"/>
</dbReference>
<dbReference type="SMR" id="Q82IE6"/>
<dbReference type="GeneID" id="41540286"/>
<dbReference type="KEGG" id="sma:SAVERM_3212"/>
<dbReference type="eggNOG" id="COG1722">
    <property type="taxonomic scope" value="Bacteria"/>
</dbReference>
<dbReference type="HOGENOM" id="CLU_145918_0_2_11"/>
<dbReference type="OrthoDB" id="5244334at2"/>
<dbReference type="Proteomes" id="UP000000428">
    <property type="component" value="Chromosome"/>
</dbReference>
<dbReference type="GO" id="GO:0005829">
    <property type="term" value="C:cytosol"/>
    <property type="evidence" value="ECO:0007669"/>
    <property type="project" value="TreeGrafter"/>
</dbReference>
<dbReference type="GO" id="GO:0009318">
    <property type="term" value="C:exodeoxyribonuclease VII complex"/>
    <property type="evidence" value="ECO:0007669"/>
    <property type="project" value="InterPro"/>
</dbReference>
<dbReference type="GO" id="GO:0008855">
    <property type="term" value="F:exodeoxyribonuclease VII activity"/>
    <property type="evidence" value="ECO:0007669"/>
    <property type="project" value="UniProtKB-UniRule"/>
</dbReference>
<dbReference type="GO" id="GO:0006308">
    <property type="term" value="P:DNA catabolic process"/>
    <property type="evidence" value="ECO:0007669"/>
    <property type="project" value="UniProtKB-UniRule"/>
</dbReference>
<dbReference type="Gene3D" id="1.10.287.1040">
    <property type="entry name" value="Exonuclease VII, small subunit"/>
    <property type="match status" value="1"/>
</dbReference>
<dbReference type="HAMAP" id="MF_00337">
    <property type="entry name" value="Exonuc_7_S"/>
    <property type="match status" value="1"/>
</dbReference>
<dbReference type="InterPro" id="IPR003761">
    <property type="entry name" value="Exonuc_VII_S"/>
</dbReference>
<dbReference type="InterPro" id="IPR037004">
    <property type="entry name" value="Exonuc_VII_ssu_sf"/>
</dbReference>
<dbReference type="NCBIfam" id="NF002139">
    <property type="entry name" value="PRK00977.1-3"/>
    <property type="match status" value="1"/>
</dbReference>
<dbReference type="NCBIfam" id="TIGR01280">
    <property type="entry name" value="xseB"/>
    <property type="match status" value="1"/>
</dbReference>
<dbReference type="PANTHER" id="PTHR34137">
    <property type="entry name" value="EXODEOXYRIBONUCLEASE 7 SMALL SUBUNIT"/>
    <property type="match status" value="1"/>
</dbReference>
<dbReference type="PANTHER" id="PTHR34137:SF1">
    <property type="entry name" value="EXODEOXYRIBONUCLEASE 7 SMALL SUBUNIT"/>
    <property type="match status" value="1"/>
</dbReference>
<dbReference type="Pfam" id="PF02609">
    <property type="entry name" value="Exonuc_VII_S"/>
    <property type="match status" value="1"/>
</dbReference>
<dbReference type="PIRSF" id="PIRSF006488">
    <property type="entry name" value="Exonuc_VII_S"/>
    <property type="match status" value="1"/>
</dbReference>
<dbReference type="SUPFAM" id="SSF116842">
    <property type="entry name" value="XseB-like"/>
    <property type="match status" value="1"/>
</dbReference>
<evidence type="ECO:0000255" key="1">
    <source>
        <dbReference type="HAMAP-Rule" id="MF_00337"/>
    </source>
</evidence>
<organism>
    <name type="scientific">Streptomyces avermitilis (strain ATCC 31267 / DSM 46492 / JCM 5070 / NBRC 14893 / NCIMB 12804 / NRRL 8165 / MA-4680)</name>
    <dbReference type="NCBI Taxonomy" id="227882"/>
    <lineage>
        <taxon>Bacteria</taxon>
        <taxon>Bacillati</taxon>
        <taxon>Actinomycetota</taxon>
        <taxon>Actinomycetes</taxon>
        <taxon>Kitasatosporales</taxon>
        <taxon>Streptomycetaceae</taxon>
        <taxon>Streptomyces</taxon>
    </lineage>
</organism>
<accession>Q82IE6</accession>
<name>EX7S_STRAW</name>
<gene>
    <name evidence="1" type="primary">xseB</name>
    <name type="ordered locus">SAV_3212</name>
</gene>
<feature type="chain" id="PRO_0000207013" description="Exodeoxyribonuclease 7 small subunit">
    <location>
        <begin position="1"/>
        <end position="80"/>
    </location>
</feature>